<organism>
    <name type="scientific">Helicobacter pylori (strain ATCC 700392 / 26695)</name>
    <name type="common">Campylobacter pylori</name>
    <dbReference type="NCBI Taxonomy" id="85962"/>
    <lineage>
        <taxon>Bacteria</taxon>
        <taxon>Pseudomonadati</taxon>
        <taxon>Campylobacterota</taxon>
        <taxon>Epsilonproteobacteria</taxon>
        <taxon>Campylobacterales</taxon>
        <taxon>Helicobacteraceae</taxon>
        <taxon>Helicobacter</taxon>
    </lineage>
</organism>
<comment type="function">
    <text evidence="1">Could be involved in insertion of integral membrane proteins into the membrane.</text>
</comment>
<comment type="subcellular location">
    <subcellularLocation>
        <location evidence="1">Cell inner membrane</location>
        <topology evidence="1">Peripheral membrane protein</topology>
        <orientation evidence="1">Cytoplasmic side</orientation>
    </subcellularLocation>
</comment>
<comment type="similarity">
    <text evidence="1">Belongs to the UPF0161 family.</text>
</comment>
<feature type="chain" id="PRO_0000171829" description="Putative membrane protein insertion efficiency factor">
    <location>
        <begin position="1"/>
        <end position="117"/>
    </location>
</feature>
<protein>
    <recommendedName>
        <fullName evidence="1">Putative membrane protein insertion efficiency factor</fullName>
    </recommendedName>
</protein>
<name>YIDD_HELPY</name>
<accession>O25988</accession>
<evidence type="ECO:0000255" key="1">
    <source>
        <dbReference type="HAMAP-Rule" id="MF_00386"/>
    </source>
</evidence>
<dbReference type="EMBL" id="AE000511">
    <property type="protein sequence ID" value="AAD08490.1"/>
    <property type="molecule type" value="Genomic_DNA"/>
</dbReference>
<dbReference type="PIR" id="A64701">
    <property type="entry name" value="A64701"/>
</dbReference>
<dbReference type="RefSeq" id="NP_208240.1">
    <property type="nucleotide sequence ID" value="NC_000915.1"/>
</dbReference>
<dbReference type="DIP" id="DIP-3739N"/>
<dbReference type="IntAct" id="O25988">
    <property type="interactions" value="3"/>
</dbReference>
<dbReference type="MINT" id="O25988"/>
<dbReference type="STRING" id="85962.HP_1449"/>
<dbReference type="PaxDb" id="85962-C694_07505"/>
<dbReference type="DNASU" id="899844"/>
<dbReference type="EnsemblBacteria" id="AAD08490">
    <property type="protein sequence ID" value="AAD08490"/>
    <property type="gene ID" value="HP_1449"/>
</dbReference>
<dbReference type="KEGG" id="heo:C694_07505"/>
<dbReference type="KEGG" id="hpy:HP_1449"/>
<dbReference type="PATRIC" id="fig|85962.47.peg.1558"/>
<dbReference type="eggNOG" id="COG0759">
    <property type="taxonomic scope" value="Bacteria"/>
</dbReference>
<dbReference type="InParanoid" id="O25988"/>
<dbReference type="OrthoDB" id="9801753at2"/>
<dbReference type="PhylomeDB" id="O25988"/>
<dbReference type="Proteomes" id="UP000000429">
    <property type="component" value="Chromosome"/>
</dbReference>
<dbReference type="GO" id="GO:0005886">
    <property type="term" value="C:plasma membrane"/>
    <property type="evidence" value="ECO:0007669"/>
    <property type="project" value="UniProtKB-SubCell"/>
</dbReference>
<dbReference type="HAMAP" id="MF_00386">
    <property type="entry name" value="UPF0161_YidD"/>
    <property type="match status" value="1"/>
</dbReference>
<dbReference type="InterPro" id="IPR002696">
    <property type="entry name" value="Membr_insert_effic_factor_YidD"/>
</dbReference>
<dbReference type="NCBIfam" id="TIGR00278">
    <property type="entry name" value="membrane protein insertion efficiency factor YidD"/>
    <property type="match status" value="1"/>
</dbReference>
<dbReference type="PANTHER" id="PTHR33383">
    <property type="entry name" value="MEMBRANE PROTEIN INSERTION EFFICIENCY FACTOR-RELATED"/>
    <property type="match status" value="1"/>
</dbReference>
<dbReference type="PANTHER" id="PTHR33383:SF1">
    <property type="entry name" value="MEMBRANE PROTEIN INSERTION EFFICIENCY FACTOR-RELATED"/>
    <property type="match status" value="1"/>
</dbReference>
<dbReference type="Pfam" id="PF01809">
    <property type="entry name" value="YidD"/>
    <property type="match status" value="1"/>
</dbReference>
<dbReference type="SMART" id="SM01234">
    <property type="entry name" value="Haemolytic"/>
    <property type="match status" value="1"/>
</dbReference>
<keyword id="KW-0997">Cell inner membrane</keyword>
<keyword id="KW-1003">Cell membrane</keyword>
<keyword id="KW-0472">Membrane</keyword>
<keyword id="KW-1185">Reference proteome</keyword>
<proteinExistence type="inferred from homology"/>
<reference key="1">
    <citation type="journal article" date="1997" name="Nature">
        <title>The complete genome sequence of the gastric pathogen Helicobacter pylori.</title>
        <authorList>
            <person name="Tomb J.-F."/>
            <person name="White O."/>
            <person name="Kerlavage A.R."/>
            <person name="Clayton R.A."/>
            <person name="Sutton G.G."/>
            <person name="Fleischmann R.D."/>
            <person name="Ketchum K.A."/>
            <person name="Klenk H.-P."/>
            <person name="Gill S.R."/>
            <person name="Dougherty B.A."/>
            <person name="Nelson K.E."/>
            <person name="Quackenbush J."/>
            <person name="Zhou L."/>
            <person name="Kirkness E.F."/>
            <person name="Peterson S.N."/>
            <person name="Loftus B.J."/>
            <person name="Richardson D.L."/>
            <person name="Dodson R.J."/>
            <person name="Khalak H.G."/>
            <person name="Glodek A."/>
            <person name="McKenney K."/>
            <person name="FitzGerald L.M."/>
            <person name="Lee N."/>
            <person name="Adams M.D."/>
            <person name="Hickey E.K."/>
            <person name="Berg D.E."/>
            <person name="Gocayne J.D."/>
            <person name="Utterback T.R."/>
            <person name="Peterson J.D."/>
            <person name="Kelley J.M."/>
            <person name="Cotton M.D."/>
            <person name="Weidman J.F."/>
            <person name="Fujii C."/>
            <person name="Bowman C."/>
            <person name="Watthey L."/>
            <person name="Wallin E."/>
            <person name="Hayes W.S."/>
            <person name="Borodovsky M."/>
            <person name="Karp P.D."/>
            <person name="Smith H.O."/>
            <person name="Fraser C.M."/>
            <person name="Venter J.C."/>
        </authorList>
    </citation>
    <scope>NUCLEOTIDE SEQUENCE [LARGE SCALE GENOMIC DNA]</scope>
    <source>
        <strain>ATCC 700392 / 26695</strain>
    </source>
</reference>
<sequence length="117" mass="13378">MRNNKTPFLSAIFTASIRGYQRFFSAFTPSSCRFYPTCSNYALWLLCFESPLSAMGKIAIRILSCNPFCSGGIAYPTTRLKRPSLIQSHKDSNRNFKTITFWLVPTKSHATYYIIKV</sequence>
<gene>
    <name type="ordered locus">HP_1449</name>
</gene>